<accession>P9WFI3</accession>
<accession>L0T7M5</accession>
<accession>O53841</accession>
<accession>Q7D977</accession>
<proteinExistence type="evidence at protein level"/>
<evidence type="ECO:0000250" key="1"/>
<evidence type="ECO:0000305" key="2"/>
<sequence>MVRADRDRWDLATSVGATATMVAAQRALAADPRYALIDDPYAAPLVRAVGMDVYTRLVDWQIPVEGDSEFDPQRMATGMACRTRFFDQFFLDATHSGIGQFVILASGLDARAYRLAWPVGSIVYEVDMPEVIEFKTATLSDLGAEPATERRTVAVDLRDDWATALQTAGFDPKVPAAWSAEGLLVYLPVEAQDALFDNITALSAPGSRLAFEFVPDTAIFADERWRNYHNRMSELGFDIDLNELVYHGQRGHVLDYLTRDGWQTSALTVTQLYEANGFAYPDDELATAFADLTYSSATLMR</sequence>
<keyword id="KW-0489">Methyltransferase</keyword>
<keyword id="KW-1185">Reference proteome</keyword>
<keyword id="KW-0949">S-adenosyl-L-methionine</keyword>
<keyword id="KW-0808">Transferase</keyword>
<reference key="1">
    <citation type="journal article" date="1998" name="Nature">
        <title>Deciphering the biology of Mycobacterium tuberculosis from the complete genome sequence.</title>
        <authorList>
            <person name="Cole S.T."/>
            <person name="Brosch R."/>
            <person name="Parkhill J."/>
            <person name="Garnier T."/>
            <person name="Churcher C.M."/>
            <person name="Harris D.E."/>
            <person name="Gordon S.V."/>
            <person name="Eiglmeier K."/>
            <person name="Gas S."/>
            <person name="Barry C.E. III"/>
            <person name="Tekaia F."/>
            <person name="Badcock K."/>
            <person name="Basham D."/>
            <person name="Brown D."/>
            <person name="Chillingworth T."/>
            <person name="Connor R."/>
            <person name="Davies R.M."/>
            <person name="Devlin K."/>
            <person name="Feltwell T."/>
            <person name="Gentles S."/>
            <person name="Hamlin N."/>
            <person name="Holroyd S."/>
            <person name="Hornsby T."/>
            <person name="Jagels K."/>
            <person name="Krogh A."/>
            <person name="McLean J."/>
            <person name="Moule S."/>
            <person name="Murphy L.D."/>
            <person name="Oliver S."/>
            <person name="Osborne J."/>
            <person name="Quail M.A."/>
            <person name="Rajandream M.A."/>
            <person name="Rogers J."/>
            <person name="Rutter S."/>
            <person name="Seeger K."/>
            <person name="Skelton S."/>
            <person name="Squares S."/>
            <person name="Squares R."/>
            <person name="Sulston J.E."/>
            <person name="Taylor K."/>
            <person name="Whitehead S."/>
            <person name="Barrell B.G."/>
        </authorList>
    </citation>
    <scope>NUCLEOTIDE SEQUENCE [LARGE SCALE GENOMIC DNA]</scope>
    <source>
        <strain>ATCC 25618 / H37Rv</strain>
    </source>
</reference>
<reference key="2">
    <citation type="journal article" date="2002" name="Microbiology">
        <title>Re-annotation of the genome sequence of Mycobacterium tuberculosis H37Rv.</title>
        <authorList>
            <person name="Camus J.-C."/>
            <person name="Pryor M.J."/>
            <person name="Medigue C."/>
            <person name="Cole S.T."/>
        </authorList>
    </citation>
    <scope>SEQUENCE REVISION</scope>
    <source>
        <strain>ATCC 25618 / H37Rv</strain>
    </source>
</reference>
<reference key="3">
    <citation type="journal article" date="2011" name="Mol. Cell. Proteomics">
        <title>Proteogenomic analysis of Mycobacterium tuberculosis by high resolution mass spectrometry.</title>
        <authorList>
            <person name="Kelkar D.S."/>
            <person name="Kumar D."/>
            <person name="Kumar P."/>
            <person name="Balakrishnan L."/>
            <person name="Muthusamy B."/>
            <person name="Yadav A.K."/>
            <person name="Shrivastava P."/>
            <person name="Marimuthu A."/>
            <person name="Anand S."/>
            <person name="Sundaram H."/>
            <person name="Kingsbury R."/>
            <person name="Harsha H.C."/>
            <person name="Nair B."/>
            <person name="Prasad T.S."/>
            <person name="Chauhan D.S."/>
            <person name="Katoch K."/>
            <person name="Katoch V.M."/>
            <person name="Kumar P."/>
            <person name="Chaerkady R."/>
            <person name="Ramachandran S."/>
            <person name="Dash D."/>
            <person name="Pandey A."/>
        </authorList>
    </citation>
    <scope>IDENTIFICATION BY MASS SPECTROMETRY [LARGE SCALE ANALYSIS]</scope>
    <source>
        <strain>ATCC 25618 / H37Rv</strain>
    </source>
</reference>
<dbReference type="EC" id="2.1.1.-"/>
<dbReference type="EMBL" id="AL123456">
    <property type="protein sequence ID" value="CCP43578.1"/>
    <property type="molecule type" value="Genomic_DNA"/>
</dbReference>
<dbReference type="PIR" id="F70811">
    <property type="entry name" value="F70811"/>
</dbReference>
<dbReference type="RefSeq" id="NP_215345.1">
    <property type="nucleotide sequence ID" value="NC_000962.3"/>
</dbReference>
<dbReference type="RefSeq" id="WP_003404349.1">
    <property type="nucleotide sequence ID" value="NZ_NVQJ01000066.1"/>
</dbReference>
<dbReference type="SMR" id="P9WFI3"/>
<dbReference type="STRING" id="83332.Rv0830"/>
<dbReference type="PaxDb" id="83332-Rv0830"/>
<dbReference type="DNASU" id="885886"/>
<dbReference type="GeneID" id="885886"/>
<dbReference type="KEGG" id="mtu:Rv0830"/>
<dbReference type="KEGG" id="mtv:RVBD_0830"/>
<dbReference type="TubercuList" id="Rv0830"/>
<dbReference type="eggNOG" id="COG3315">
    <property type="taxonomic scope" value="Bacteria"/>
</dbReference>
<dbReference type="InParanoid" id="P9WFI3"/>
<dbReference type="OrthoDB" id="9806164at2"/>
<dbReference type="PhylomeDB" id="P9WFI3"/>
<dbReference type="Proteomes" id="UP000001584">
    <property type="component" value="Chromosome"/>
</dbReference>
<dbReference type="GO" id="GO:0009274">
    <property type="term" value="C:peptidoglycan-based cell wall"/>
    <property type="evidence" value="ECO:0007005"/>
    <property type="project" value="MTBBASE"/>
</dbReference>
<dbReference type="GO" id="GO:0005886">
    <property type="term" value="C:plasma membrane"/>
    <property type="evidence" value="ECO:0007005"/>
    <property type="project" value="MTBBASE"/>
</dbReference>
<dbReference type="GO" id="GO:0008168">
    <property type="term" value="F:methyltransferase activity"/>
    <property type="evidence" value="ECO:0007669"/>
    <property type="project" value="UniProtKB-KW"/>
</dbReference>
<dbReference type="GO" id="GO:0032259">
    <property type="term" value="P:methylation"/>
    <property type="evidence" value="ECO:0007669"/>
    <property type="project" value="UniProtKB-KW"/>
</dbReference>
<dbReference type="FunFam" id="3.40.50.150:FF:000152">
    <property type="entry name" value="S-adenosyl-L-methionine-dependent methyltransferase"/>
    <property type="match status" value="1"/>
</dbReference>
<dbReference type="Gene3D" id="3.40.50.150">
    <property type="entry name" value="Vaccinia Virus protein VP39"/>
    <property type="match status" value="1"/>
</dbReference>
<dbReference type="InterPro" id="IPR007213">
    <property type="entry name" value="Ppm1/Ppm2/Tcmp"/>
</dbReference>
<dbReference type="InterPro" id="IPR029063">
    <property type="entry name" value="SAM-dependent_MTases_sf"/>
</dbReference>
<dbReference type="InterPro" id="IPR011610">
    <property type="entry name" value="SAM_mthyl_Trfase_ML2640-like"/>
</dbReference>
<dbReference type="NCBIfam" id="TIGR00027">
    <property type="entry name" value="mthyl_TIGR00027"/>
    <property type="match status" value="1"/>
</dbReference>
<dbReference type="PANTHER" id="PTHR43619">
    <property type="entry name" value="S-ADENOSYL-L-METHIONINE-DEPENDENT METHYLTRANSFERASE YKTD-RELATED"/>
    <property type="match status" value="1"/>
</dbReference>
<dbReference type="PANTHER" id="PTHR43619:SF2">
    <property type="entry name" value="S-ADENOSYL-L-METHIONINE-DEPENDENT METHYLTRANSFERASES SUPERFAMILY PROTEIN"/>
    <property type="match status" value="1"/>
</dbReference>
<dbReference type="Pfam" id="PF04072">
    <property type="entry name" value="LCM"/>
    <property type="match status" value="1"/>
</dbReference>
<dbReference type="SUPFAM" id="SSF53335">
    <property type="entry name" value="S-adenosyl-L-methionine-dependent methyltransferases"/>
    <property type="match status" value="1"/>
</dbReference>
<name>Y851_MYCTU</name>
<gene>
    <name type="ordered locus">Rv0830</name>
</gene>
<organism>
    <name type="scientific">Mycobacterium tuberculosis (strain ATCC 25618 / H37Rv)</name>
    <dbReference type="NCBI Taxonomy" id="83332"/>
    <lineage>
        <taxon>Bacteria</taxon>
        <taxon>Bacillati</taxon>
        <taxon>Actinomycetota</taxon>
        <taxon>Actinomycetes</taxon>
        <taxon>Mycobacteriales</taxon>
        <taxon>Mycobacteriaceae</taxon>
        <taxon>Mycobacterium</taxon>
        <taxon>Mycobacterium tuberculosis complex</taxon>
    </lineage>
</organism>
<feature type="chain" id="PRO_0000361244" description="Putative S-adenosyl-L-methionine-dependent methyltransferase Rv0830">
    <location>
        <begin position="1"/>
        <end position="301"/>
    </location>
</feature>
<feature type="binding site" evidence="1">
    <location>
        <position position="127"/>
    </location>
    <ligand>
        <name>S-adenosyl-L-methionine</name>
        <dbReference type="ChEBI" id="CHEBI:59789"/>
    </ligand>
</feature>
<feature type="binding site" evidence="1">
    <location>
        <begin position="156"/>
        <end position="157"/>
    </location>
    <ligand>
        <name>S-adenosyl-L-methionine</name>
        <dbReference type="ChEBI" id="CHEBI:59789"/>
    </ligand>
</feature>
<comment type="function">
    <text evidence="1">Exhibits S-adenosyl-L-methionine-dependent methyltransferase activity.</text>
</comment>
<comment type="similarity">
    <text evidence="2">Belongs to the UPF0677 family.</text>
</comment>
<protein>
    <recommendedName>
        <fullName>Putative S-adenosyl-L-methionine-dependent methyltransferase Rv0830</fullName>
        <ecNumber>2.1.1.-</ecNumber>
    </recommendedName>
</protein>